<accession>A1DP58</accession>
<keyword id="KW-0472">Membrane</keyword>
<keyword id="KW-0539">Nucleus</keyword>
<keyword id="KW-1185">Reference proteome</keyword>
<keyword id="KW-0677">Repeat</keyword>
<keyword id="KW-0687">Ribonucleoprotein</keyword>
<keyword id="KW-0690">Ribosome biogenesis</keyword>
<keyword id="KW-0698">rRNA processing</keyword>
<keyword id="KW-0812">Transmembrane</keyword>
<keyword id="KW-1133">Transmembrane helix</keyword>
<proteinExistence type="inferred from homology"/>
<comment type="function">
    <text evidence="1">Involved in nucleolar processing of pre-18S ribosomal RNA. Involved in ribosome biosynthesis (By similarity).</text>
</comment>
<comment type="subunit">
    <text evidence="1">Component of the ribosomal small subunit (SSU) processome.</text>
</comment>
<comment type="subcellular location">
    <subcellularLocation>
        <location evidence="1 2">Nucleus</location>
        <location evidence="1 2">Nucleolus</location>
    </subcellularLocation>
    <subcellularLocation>
        <location evidence="2">Membrane</location>
        <topology evidence="2">Multi-pass membrane protein</topology>
    </subcellularLocation>
</comment>
<comment type="similarity">
    <text evidence="3">Belongs to the HEATR1/UTP10 family.</text>
</comment>
<evidence type="ECO:0000250" key="1">
    <source>
        <dbReference type="UniProtKB" id="P42945"/>
    </source>
</evidence>
<evidence type="ECO:0000255" key="2"/>
<evidence type="ECO:0000305" key="3"/>
<gene>
    <name evidence="1" type="primary">utp10</name>
    <name type="ORF">NFIA_059300</name>
</gene>
<feature type="chain" id="PRO_0000308508" description="U3 small nucleolar RNA-associated protein 10">
    <location>
        <begin position="1"/>
        <end position="1814"/>
    </location>
</feature>
<feature type="transmembrane region" description="Helical" evidence="2">
    <location>
        <begin position="942"/>
        <end position="962"/>
    </location>
</feature>
<feature type="transmembrane region" description="Helical" evidence="2">
    <location>
        <begin position="998"/>
        <end position="1018"/>
    </location>
</feature>
<feature type="repeat" description="HEAT 1" evidence="2">
    <location>
        <begin position="583"/>
        <end position="620"/>
    </location>
</feature>
<feature type="repeat" description="HEAT 2" evidence="2">
    <location>
        <begin position="1042"/>
        <end position="1079"/>
    </location>
</feature>
<feature type="repeat" description="HEAT 3" evidence="2">
    <location>
        <begin position="1249"/>
        <end position="1286"/>
    </location>
</feature>
<feature type="repeat" description="HEAT 4" evidence="2">
    <location>
        <begin position="1293"/>
        <end position="1331"/>
    </location>
</feature>
<feature type="repeat" description="HEAT 5" evidence="2">
    <location>
        <begin position="1770"/>
        <end position="1807"/>
    </location>
</feature>
<sequence length="1814" mass="200465">MASSLAAQLSQIAAKSTNQLDLKAQRTAHSQSLIFDRKVASTQDFDTVYQICYEGFQELCQLDSRFTAFERTIFSEQSKAEDRTQLTAAQNKELDVALEAFLALVGGRLLLNPAVKAVEWLVRRFRIHEYNTSFTILTFLPYYTTPLFLNLLAILPEDLTPTFKVLIPYKKGSINPPRHPLVHSATTNKPFLAALNSYVLQVSRQQAHHHALLAFWAGIYTEAVAGMLDASRSGRREVEKQKHEDIVIRVLPILNDGFAMKNVSELVIGCYMVSVVLAQKASLQDKVLDGLMEAVAGSWTEETIESGLVCLAVLAQQKPETKLPRRALKAILRLDDVLKRLTEIATQYKTSHLLLGVVAGCLDDLPRQKDTARLDLLSRIFQNQLLGEPEMSKAMTLVLEATSSVHKDGAMSLDAQARLADLVQVFSQSESLQPTFQKTIAESSFDIAALEHNLQTVIDTAPAPRTVEDVEMEDVEKEEEQDNFSSAVESLSGEKLFKGSFLSTQSIPLFERLAQAFTLAVGSNEKCQTFSDLAALGKSEATKSPQYLSFFIRVFSGPYPMGTRATALNMITSFLTSTENTNLDFQALLPFLLVALTDASERVRREAAAALAAVGSLYKKNKKGEDVWARSNLYGQLKDIKWLPTRDAQKIFERAVLPSLEECIIDAAHIGRVLENTLRGVSVDANASELKKPLRLAFFTFLCSNAIELPLFTPKLGLLNILNRIDKAGGTTRTKELEPLLKTWRGFSEREVQDICEKERVPVSDVERQMVTIVTPKEKDAIMILLSNVSPHSESLRPSFIAAVFGRIKGIWARVAEDRQVVAAEQLFEISLGVSNLPLVNNCRDLLRSVQLPGSVLAQFLERIPVSLTDMEALGPAPKRRRTSQNNMIAMTVKDEAEFGKVMEKMTFILELVDSSSPETHPELADGLFQALAALHHFKSQIQSGMSYLLSLTLGSLLAIVNRSKESAKAQFDTSVIRADLVVDCVRTTESPQVQNAALLLVAGLSVIAPELVLHSVMPIFTFMGSSVLRKDDEYSVSVIDQTIDQVVPALIQSLRDQKRDVVSGTSELLLSFTAAFEHIPSHRRLRLFHALITKLGTQDFLFAVLAMLANRYAMDKDVLVLMTGLVSDASAPVELTTYSKFLGLVSDSLKPKPGISQVLLGIGSDDGREPQKVAVDLLRDLAYLFKHSSLKVKMAKTFASEDEEAIRQLRTIFSQILEQVLTIGDSVQSMKLVSQANGDVLAALFGTLTLVDFLDTIEVLLERPNDELRRKVLRLLEGRLRQNPERDSASQIRVLDFLPTLVDIIRNSADILLKHAAVACIDRIAEKYGKKDPSRVVSAAQVVASEACIGQTDDRIRIMGVLCLASMAETLGQVMIPALPEALSRSLALLELSLEEGKENSRLHDAVFSLFSALFVHIPYMISGPHLDKILLLSFKSANAEDCEDDSRQEALKMMARKVDMAATLGAVDRNWQYAVQAGPVATKETLEVVSLAVEKHPKSATGKNIGVLSSILFKAFDLRREQLALGANATFDAADVDEIEDALNDVTIKMIYKLNDTTFRPIFTKMLDWATSGLPKKDTQGSWARLTTFYKFLQVFFGTLQSIVTGYASYIIESVVSVLGKASPADKSTKALWLATMRLLRNAFEHDQDGMPVLPINPCLKLTITEFWQSPSHLNQISTPLINQLAHATNSSTAATVIAEAVPAITELAVAADSTDNHKELNTALMKFLRPSAGPNGKPAGGENPHTRLAALKAEQSLTEQLGEEWLALLPEMLPYISELMEDEDENVEREVRKWVKQIENVLGEKLDDMLT</sequence>
<dbReference type="EMBL" id="DS027698">
    <property type="protein sequence ID" value="EAW16579.1"/>
    <property type="molecule type" value="Genomic_DNA"/>
</dbReference>
<dbReference type="RefSeq" id="XP_001258476.1">
    <property type="nucleotide sequence ID" value="XM_001258475.1"/>
</dbReference>
<dbReference type="SMR" id="A1DP58"/>
<dbReference type="STRING" id="331117.A1DP58"/>
<dbReference type="EnsemblFungi" id="EAW16579">
    <property type="protein sequence ID" value="EAW16579"/>
    <property type="gene ID" value="NFIA_059300"/>
</dbReference>
<dbReference type="GeneID" id="4584992"/>
<dbReference type="KEGG" id="nfi:NFIA_059300"/>
<dbReference type="VEuPathDB" id="FungiDB:NFIA_059300"/>
<dbReference type="eggNOG" id="KOG1837">
    <property type="taxonomic scope" value="Eukaryota"/>
</dbReference>
<dbReference type="HOGENOM" id="CLU_001128_3_1_1"/>
<dbReference type="OMA" id="NDVMWKQ"/>
<dbReference type="OrthoDB" id="31183at2759"/>
<dbReference type="Proteomes" id="UP000006702">
    <property type="component" value="Unassembled WGS sequence"/>
</dbReference>
<dbReference type="GO" id="GO:0030686">
    <property type="term" value="C:90S preribosome"/>
    <property type="evidence" value="ECO:0007669"/>
    <property type="project" value="TreeGrafter"/>
</dbReference>
<dbReference type="GO" id="GO:0016020">
    <property type="term" value="C:membrane"/>
    <property type="evidence" value="ECO:0007669"/>
    <property type="project" value="UniProtKB-SubCell"/>
</dbReference>
<dbReference type="GO" id="GO:0032040">
    <property type="term" value="C:small-subunit processome"/>
    <property type="evidence" value="ECO:0007669"/>
    <property type="project" value="TreeGrafter"/>
</dbReference>
<dbReference type="GO" id="GO:0034455">
    <property type="term" value="C:t-UTP complex"/>
    <property type="evidence" value="ECO:0007669"/>
    <property type="project" value="TreeGrafter"/>
</dbReference>
<dbReference type="GO" id="GO:0030515">
    <property type="term" value="F:snoRNA binding"/>
    <property type="evidence" value="ECO:0007669"/>
    <property type="project" value="TreeGrafter"/>
</dbReference>
<dbReference type="GO" id="GO:0000462">
    <property type="term" value="P:maturation of SSU-rRNA from tricistronic rRNA transcript (SSU-rRNA, 5.8S rRNA, LSU-rRNA)"/>
    <property type="evidence" value="ECO:0007669"/>
    <property type="project" value="TreeGrafter"/>
</dbReference>
<dbReference type="GO" id="GO:0045943">
    <property type="term" value="P:positive regulation of transcription by RNA polymerase I"/>
    <property type="evidence" value="ECO:0007669"/>
    <property type="project" value="TreeGrafter"/>
</dbReference>
<dbReference type="Gene3D" id="1.25.10.10">
    <property type="entry name" value="Leucine-rich Repeat Variant"/>
    <property type="match status" value="3"/>
</dbReference>
<dbReference type="InterPro" id="IPR011989">
    <property type="entry name" value="ARM-like"/>
</dbReference>
<dbReference type="InterPro" id="IPR016024">
    <property type="entry name" value="ARM-type_fold"/>
</dbReference>
<dbReference type="InterPro" id="IPR012954">
    <property type="entry name" value="BP28_C_dom"/>
</dbReference>
<dbReference type="InterPro" id="IPR021133">
    <property type="entry name" value="HEAT_type_2"/>
</dbReference>
<dbReference type="InterPro" id="IPR056473">
    <property type="entry name" value="HEAT_Utp10/HEAT1"/>
</dbReference>
<dbReference type="InterPro" id="IPR022125">
    <property type="entry name" value="U3snoRNP10_N"/>
</dbReference>
<dbReference type="InterPro" id="IPR040191">
    <property type="entry name" value="UTP10"/>
</dbReference>
<dbReference type="PANTHER" id="PTHR13457">
    <property type="entry name" value="BAP28"/>
    <property type="match status" value="1"/>
</dbReference>
<dbReference type="PANTHER" id="PTHR13457:SF1">
    <property type="entry name" value="HEAT REPEAT-CONTAINING PROTEIN 1"/>
    <property type="match status" value="1"/>
</dbReference>
<dbReference type="Pfam" id="PF08146">
    <property type="entry name" value="BP28CT"/>
    <property type="match status" value="1"/>
</dbReference>
<dbReference type="Pfam" id="PF23243">
    <property type="entry name" value="HEAT_HEATR1"/>
    <property type="match status" value="1"/>
</dbReference>
<dbReference type="Pfam" id="PF12397">
    <property type="entry name" value="U3snoRNP10"/>
    <property type="match status" value="1"/>
</dbReference>
<dbReference type="SMART" id="SM01036">
    <property type="entry name" value="BP28CT"/>
    <property type="match status" value="1"/>
</dbReference>
<dbReference type="SUPFAM" id="SSF48371">
    <property type="entry name" value="ARM repeat"/>
    <property type="match status" value="2"/>
</dbReference>
<dbReference type="PROSITE" id="PS50077">
    <property type="entry name" value="HEAT_REPEAT"/>
    <property type="match status" value="2"/>
</dbReference>
<name>UTP10_NEOFI</name>
<reference key="1">
    <citation type="journal article" date="2008" name="PLoS Genet.">
        <title>Genomic islands in the pathogenic filamentous fungus Aspergillus fumigatus.</title>
        <authorList>
            <person name="Fedorova N.D."/>
            <person name="Khaldi N."/>
            <person name="Joardar V.S."/>
            <person name="Maiti R."/>
            <person name="Amedeo P."/>
            <person name="Anderson M.J."/>
            <person name="Crabtree J."/>
            <person name="Silva J.C."/>
            <person name="Badger J.H."/>
            <person name="Albarraq A."/>
            <person name="Angiuoli S."/>
            <person name="Bussey H."/>
            <person name="Bowyer P."/>
            <person name="Cotty P.J."/>
            <person name="Dyer P.S."/>
            <person name="Egan A."/>
            <person name="Galens K."/>
            <person name="Fraser-Liggett C.M."/>
            <person name="Haas B.J."/>
            <person name="Inman J.M."/>
            <person name="Kent R."/>
            <person name="Lemieux S."/>
            <person name="Malavazi I."/>
            <person name="Orvis J."/>
            <person name="Roemer T."/>
            <person name="Ronning C.M."/>
            <person name="Sundaram J.P."/>
            <person name="Sutton G."/>
            <person name="Turner G."/>
            <person name="Venter J.C."/>
            <person name="White O.R."/>
            <person name="Whitty B.R."/>
            <person name="Youngman P."/>
            <person name="Wolfe K.H."/>
            <person name="Goldman G.H."/>
            <person name="Wortman J.R."/>
            <person name="Jiang B."/>
            <person name="Denning D.W."/>
            <person name="Nierman W.C."/>
        </authorList>
    </citation>
    <scope>NUCLEOTIDE SEQUENCE [LARGE SCALE GENOMIC DNA]</scope>
    <source>
        <strain>ATCC 1020 / DSM 3700 / CBS 544.65 / FGSC A1164 / JCM 1740 / NRRL 181 / WB 181</strain>
    </source>
</reference>
<organism>
    <name type="scientific">Neosartorya fischeri (strain ATCC 1020 / DSM 3700 / CBS 544.65 / FGSC A1164 / JCM 1740 / NRRL 181 / WB 181)</name>
    <name type="common">Aspergillus fischerianus</name>
    <dbReference type="NCBI Taxonomy" id="331117"/>
    <lineage>
        <taxon>Eukaryota</taxon>
        <taxon>Fungi</taxon>
        <taxon>Dikarya</taxon>
        <taxon>Ascomycota</taxon>
        <taxon>Pezizomycotina</taxon>
        <taxon>Eurotiomycetes</taxon>
        <taxon>Eurotiomycetidae</taxon>
        <taxon>Eurotiales</taxon>
        <taxon>Aspergillaceae</taxon>
        <taxon>Aspergillus</taxon>
        <taxon>Aspergillus subgen. Fumigati</taxon>
    </lineage>
</organism>
<protein>
    <recommendedName>
        <fullName>U3 small nucleolar RNA-associated protein 10</fullName>
    </recommendedName>
</protein>